<comment type="function">
    <text evidence="1">Specifically methylates the N4 position of cytidine in position 1402 (C1402) of 16S rRNA.</text>
</comment>
<comment type="catalytic activity">
    <reaction evidence="1">
        <text>cytidine(1402) in 16S rRNA + S-adenosyl-L-methionine = N(4)-methylcytidine(1402) in 16S rRNA + S-adenosyl-L-homocysteine + H(+)</text>
        <dbReference type="Rhea" id="RHEA:42928"/>
        <dbReference type="Rhea" id="RHEA-COMP:10286"/>
        <dbReference type="Rhea" id="RHEA-COMP:10287"/>
        <dbReference type="ChEBI" id="CHEBI:15378"/>
        <dbReference type="ChEBI" id="CHEBI:57856"/>
        <dbReference type="ChEBI" id="CHEBI:59789"/>
        <dbReference type="ChEBI" id="CHEBI:74506"/>
        <dbReference type="ChEBI" id="CHEBI:82748"/>
        <dbReference type="EC" id="2.1.1.199"/>
    </reaction>
</comment>
<comment type="subcellular location">
    <subcellularLocation>
        <location evidence="1">Cytoplasm</location>
    </subcellularLocation>
</comment>
<comment type="similarity">
    <text evidence="1">Belongs to the methyltransferase superfamily. RsmH family.</text>
</comment>
<dbReference type="EC" id="2.1.1.199" evidence="1"/>
<dbReference type="EMBL" id="CP000724">
    <property type="protein sequence ID" value="ABR49895.1"/>
    <property type="molecule type" value="Genomic_DNA"/>
</dbReference>
<dbReference type="RefSeq" id="WP_012064855.1">
    <property type="nucleotide sequence ID" value="NC_009633.1"/>
</dbReference>
<dbReference type="SMR" id="A6TUM7"/>
<dbReference type="STRING" id="293826.Amet_3776"/>
<dbReference type="KEGG" id="amt:Amet_3776"/>
<dbReference type="eggNOG" id="COG0275">
    <property type="taxonomic scope" value="Bacteria"/>
</dbReference>
<dbReference type="HOGENOM" id="CLU_038422_1_1_9"/>
<dbReference type="OrthoDB" id="9806637at2"/>
<dbReference type="Proteomes" id="UP000001572">
    <property type="component" value="Chromosome"/>
</dbReference>
<dbReference type="GO" id="GO:0005737">
    <property type="term" value="C:cytoplasm"/>
    <property type="evidence" value="ECO:0007669"/>
    <property type="project" value="UniProtKB-SubCell"/>
</dbReference>
<dbReference type="GO" id="GO:0071424">
    <property type="term" value="F:rRNA (cytosine-N4-)-methyltransferase activity"/>
    <property type="evidence" value="ECO:0007669"/>
    <property type="project" value="UniProtKB-UniRule"/>
</dbReference>
<dbReference type="GO" id="GO:0070475">
    <property type="term" value="P:rRNA base methylation"/>
    <property type="evidence" value="ECO:0007669"/>
    <property type="project" value="UniProtKB-UniRule"/>
</dbReference>
<dbReference type="Gene3D" id="1.10.150.170">
    <property type="entry name" value="Putative methyltransferase TM0872, insert domain"/>
    <property type="match status" value="1"/>
</dbReference>
<dbReference type="Gene3D" id="3.40.50.150">
    <property type="entry name" value="Vaccinia Virus protein VP39"/>
    <property type="match status" value="1"/>
</dbReference>
<dbReference type="HAMAP" id="MF_01007">
    <property type="entry name" value="16SrRNA_methyltr_H"/>
    <property type="match status" value="1"/>
</dbReference>
<dbReference type="InterPro" id="IPR002903">
    <property type="entry name" value="RsmH"/>
</dbReference>
<dbReference type="InterPro" id="IPR023397">
    <property type="entry name" value="SAM-dep_MeTrfase_MraW_recog"/>
</dbReference>
<dbReference type="InterPro" id="IPR029063">
    <property type="entry name" value="SAM-dependent_MTases_sf"/>
</dbReference>
<dbReference type="NCBIfam" id="TIGR00006">
    <property type="entry name" value="16S rRNA (cytosine(1402)-N(4))-methyltransferase RsmH"/>
    <property type="match status" value="1"/>
</dbReference>
<dbReference type="PANTHER" id="PTHR11265:SF0">
    <property type="entry name" value="12S RRNA N4-METHYLCYTIDINE METHYLTRANSFERASE"/>
    <property type="match status" value="1"/>
</dbReference>
<dbReference type="PANTHER" id="PTHR11265">
    <property type="entry name" value="S-ADENOSYL-METHYLTRANSFERASE MRAW"/>
    <property type="match status" value="1"/>
</dbReference>
<dbReference type="Pfam" id="PF01795">
    <property type="entry name" value="Methyltransf_5"/>
    <property type="match status" value="1"/>
</dbReference>
<dbReference type="PIRSF" id="PIRSF004486">
    <property type="entry name" value="MraW"/>
    <property type="match status" value="1"/>
</dbReference>
<dbReference type="SUPFAM" id="SSF81799">
    <property type="entry name" value="Putative methyltransferase TM0872, insert domain"/>
    <property type="match status" value="1"/>
</dbReference>
<dbReference type="SUPFAM" id="SSF53335">
    <property type="entry name" value="S-adenosyl-L-methionine-dependent methyltransferases"/>
    <property type="match status" value="1"/>
</dbReference>
<feature type="chain" id="PRO_0000386707" description="Ribosomal RNA small subunit methyltransferase H 2">
    <location>
        <begin position="1"/>
        <end position="349"/>
    </location>
</feature>
<feature type="binding site" evidence="1">
    <location>
        <begin position="80"/>
        <end position="82"/>
    </location>
    <ligand>
        <name>S-adenosyl-L-methionine</name>
        <dbReference type="ChEBI" id="CHEBI:59789"/>
    </ligand>
</feature>
<feature type="binding site" evidence="1">
    <location>
        <position position="100"/>
    </location>
    <ligand>
        <name>S-adenosyl-L-methionine</name>
        <dbReference type="ChEBI" id="CHEBI:59789"/>
    </ligand>
</feature>
<feature type="binding site" evidence="1">
    <location>
        <position position="130"/>
    </location>
    <ligand>
        <name>S-adenosyl-L-methionine</name>
        <dbReference type="ChEBI" id="CHEBI:59789"/>
    </ligand>
</feature>
<feature type="binding site" evidence="1">
    <location>
        <position position="149"/>
    </location>
    <ligand>
        <name>S-adenosyl-L-methionine</name>
        <dbReference type="ChEBI" id="CHEBI:59789"/>
    </ligand>
</feature>
<feature type="binding site" evidence="1">
    <location>
        <position position="156"/>
    </location>
    <ligand>
        <name>S-adenosyl-L-methionine</name>
        <dbReference type="ChEBI" id="CHEBI:59789"/>
    </ligand>
</feature>
<name>RSMH2_ALKMQ</name>
<organism>
    <name type="scientific">Alkaliphilus metalliredigens (strain QYMF)</name>
    <dbReference type="NCBI Taxonomy" id="293826"/>
    <lineage>
        <taxon>Bacteria</taxon>
        <taxon>Bacillati</taxon>
        <taxon>Bacillota</taxon>
        <taxon>Clostridia</taxon>
        <taxon>Peptostreptococcales</taxon>
        <taxon>Natronincolaceae</taxon>
        <taxon>Alkaliphilus</taxon>
    </lineage>
</organism>
<protein>
    <recommendedName>
        <fullName evidence="1">Ribosomal RNA small subunit methyltransferase H 2</fullName>
        <ecNumber evidence="1">2.1.1.199</ecNumber>
    </recommendedName>
    <alternativeName>
        <fullName evidence="1">16S rRNA m(4)C1402 methyltransferase 2</fullName>
    </alternativeName>
    <alternativeName>
        <fullName evidence="1">rRNA (cytosine-N(4)-)-methyltransferase RsmH 2</fullName>
    </alternativeName>
</protein>
<gene>
    <name evidence="1" type="primary">rsmH2</name>
    <name type="synonym">mraW2</name>
    <name type="ordered locus">Amet_3776</name>
</gene>
<sequence>MDNHEEKRQRRVRYNGTHPKVFKEKYKELQPDKYADAVAKVIQKGSTPAGMHRSICVNEILEFLKITPGQTGLDATLGYGGHTLEMLKRLNSKGHLYAIDVDSIELPRTQERLEGLGYGSEILTIKQMNFSNIDQIALESGPLNFVLADLGVSSMQIDNPERGFSFKSEGPLDLRLNPNRGISAAARLKTISQDELQGMLLENADEPNSAAISRAIISEIKKGIDISTTTQLQQIIKDALKFIPQNTRKDEIKKSCQRCFQALRIDVNDEFEMLYEFLEKLPATLAEGGRVAILSFHSGEDRLVKKSFQRFFREGVYREIAPNFIRPSTEECNTNGRARSAKLRWAIKA</sequence>
<evidence type="ECO:0000255" key="1">
    <source>
        <dbReference type="HAMAP-Rule" id="MF_01007"/>
    </source>
</evidence>
<keyword id="KW-0963">Cytoplasm</keyword>
<keyword id="KW-0489">Methyltransferase</keyword>
<keyword id="KW-1185">Reference proteome</keyword>
<keyword id="KW-0698">rRNA processing</keyword>
<keyword id="KW-0949">S-adenosyl-L-methionine</keyword>
<keyword id="KW-0808">Transferase</keyword>
<proteinExistence type="inferred from homology"/>
<accession>A6TUM7</accession>
<reference key="1">
    <citation type="journal article" date="2016" name="Genome Announc.">
        <title>Complete genome sequence of Alkaliphilus metalliredigens strain QYMF, an alkaliphilic and metal-reducing bacterium isolated from borax-contaminated leachate ponds.</title>
        <authorList>
            <person name="Hwang C."/>
            <person name="Copeland A."/>
            <person name="Lucas S."/>
            <person name="Lapidus A."/>
            <person name="Barry K."/>
            <person name="Detter J.C."/>
            <person name="Glavina Del Rio T."/>
            <person name="Hammon N."/>
            <person name="Israni S."/>
            <person name="Dalin E."/>
            <person name="Tice H."/>
            <person name="Pitluck S."/>
            <person name="Chertkov O."/>
            <person name="Brettin T."/>
            <person name="Bruce D."/>
            <person name="Han C."/>
            <person name="Schmutz J."/>
            <person name="Larimer F."/>
            <person name="Land M.L."/>
            <person name="Hauser L."/>
            <person name="Kyrpides N."/>
            <person name="Mikhailova N."/>
            <person name="Ye Q."/>
            <person name="Zhou J."/>
            <person name="Richardson P."/>
            <person name="Fields M.W."/>
        </authorList>
    </citation>
    <scope>NUCLEOTIDE SEQUENCE [LARGE SCALE GENOMIC DNA]</scope>
    <source>
        <strain>QYMF</strain>
    </source>
</reference>